<evidence type="ECO:0000255" key="1">
    <source>
        <dbReference type="HAMAP-Rule" id="MF_01398"/>
    </source>
</evidence>
<organism>
    <name type="scientific">Morus indica</name>
    <name type="common">Mulberry</name>
    <dbReference type="NCBI Taxonomy" id="248361"/>
    <lineage>
        <taxon>Eukaryota</taxon>
        <taxon>Viridiplantae</taxon>
        <taxon>Streptophyta</taxon>
        <taxon>Embryophyta</taxon>
        <taxon>Tracheophyta</taxon>
        <taxon>Spermatophyta</taxon>
        <taxon>Magnoliopsida</taxon>
        <taxon>eudicotyledons</taxon>
        <taxon>Gunneridae</taxon>
        <taxon>Pentapetalae</taxon>
        <taxon>rosids</taxon>
        <taxon>fabids</taxon>
        <taxon>Rosales</taxon>
        <taxon>Moraceae</taxon>
        <taxon>Moreae</taxon>
        <taxon>Morus</taxon>
    </lineage>
</organism>
<gene>
    <name evidence="1" type="primary">atpF</name>
    <name type="ordered locus">MoinCp007</name>
</gene>
<sequence>MKNVTDPFLSLSYWPSAGSFGFNTDILATNPINLSVVLGVLIFFGKGVLSDLLDNRKQRILKTIRNSEELREGALEQLEKARSRLRKVEKEADQFRVNGYSEIEREKLNLINSTSKTLEQLENYKNETIHFEQQRAINEVRQRVFQQALEGALGTLNSCLNNELHLRTISTNIGMFGTMKEITD</sequence>
<geneLocation type="chloroplast"/>
<dbReference type="EMBL" id="DQ226511">
    <property type="protein sequence ID" value="ABB20944.1"/>
    <property type="molecule type" value="Genomic_DNA"/>
</dbReference>
<dbReference type="RefSeq" id="YP_762247.1">
    <property type="nucleotide sequence ID" value="NC_008359.1"/>
</dbReference>
<dbReference type="SMR" id="Q09X31"/>
<dbReference type="GeneID" id="4290590"/>
<dbReference type="GO" id="GO:0009535">
    <property type="term" value="C:chloroplast thylakoid membrane"/>
    <property type="evidence" value="ECO:0007669"/>
    <property type="project" value="UniProtKB-SubCell"/>
</dbReference>
<dbReference type="GO" id="GO:0045259">
    <property type="term" value="C:proton-transporting ATP synthase complex"/>
    <property type="evidence" value="ECO:0007669"/>
    <property type="project" value="UniProtKB-KW"/>
</dbReference>
<dbReference type="GO" id="GO:0046933">
    <property type="term" value="F:proton-transporting ATP synthase activity, rotational mechanism"/>
    <property type="evidence" value="ECO:0007669"/>
    <property type="project" value="UniProtKB-UniRule"/>
</dbReference>
<dbReference type="CDD" id="cd06503">
    <property type="entry name" value="ATP-synt_Fo_b"/>
    <property type="match status" value="1"/>
</dbReference>
<dbReference type="HAMAP" id="MF_01398">
    <property type="entry name" value="ATP_synth_b_bprime"/>
    <property type="match status" value="1"/>
</dbReference>
<dbReference type="InterPro" id="IPR002146">
    <property type="entry name" value="ATP_synth_b/b'su_bac/chlpt"/>
</dbReference>
<dbReference type="PANTHER" id="PTHR34264">
    <property type="entry name" value="ATP SYNTHASE SUBUNIT B, CHLOROPLASTIC"/>
    <property type="match status" value="1"/>
</dbReference>
<dbReference type="PANTHER" id="PTHR34264:SF3">
    <property type="entry name" value="ATP SYNTHASE SUBUNIT B, CHLOROPLASTIC"/>
    <property type="match status" value="1"/>
</dbReference>
<dbReference type="Pfam" id="PF00430">
    <property type="entry name" value="ATP-synt_B"/>
    <property type="match status" value="1"/>
</dbReference>
<accession>Q09X31</accession>
<reference key="1">
    <citation type="submission" date="2005-09" db="EMBL/GenBank/DDBJ databases">
        <title>The chloroplast genome of mulberry: structural features and comparative analysis.</title>
        <authorList>
            <person name="Ravi V."/>
            <person name="Khurana J.P."/>
            <person name="Tyagi A.K."/>
            <person name="Khurana P."/>
        </authorList>
    </citation>
    <scope>NUCLEOTIDE SEQUENCE [LARGE SCALE GENOMIC DNA]</scope>
    <source>
        <strain>cv. K2</strain>
    </source>
</reference>
<feature type="chain" id="PRO_0000368952" description="ATP synthase subunit b, chloroplastic">
    <location>
        <begin position="1"/>
        <end position="184"/>
    </location>
</feature>
<feature type="transmembrane region" description="Helical" evidence="1">
    <location>
        <begin position="27"/>
        <end position="49"/>
    </location>
</feature>
<proteinExistence type="inferred from homology"/>
<keyword id="KW-0066">ATP synthesis</keyword>
<keyword id="KW-0138">CF(0)</keyword>
<keyword id="KW-0150">Chloroplast</keyword>
<keyword id="KW-0375">Hydrogen ion transport</keyword>
<keyword id="KW-0406">Ion transport</keyword>
<keyword id="KW-0472">Membrane</keyword>
<keyword id="KW-0934">Plastid</keyword>
<keyword id="KW-0793">Thylakoid</keyword>
<keyword id="KW-0812">Transmembrane</keyword>
<keyword id="KW-1133">Transmembrane helix</keyword>
<keyword id="KW-0813">Transport</keyword>
<protein>
    <recommendedName>
        <fullName evidence="1">ATP synthase subunit b, chloroplastic</fullName>
    </recommendedName>
    <alternativeName>
        <fullName evidence="1">ATP synthase F(0) sector subunit b</fullName>
    </alternativeName>
    <alternativeName>
        <fullName evidence="1">ATPase subunit I</fullName>
    </alternativeName>
</protein>
<comment type="function">
    <text evidence="1">F(1)F(0) ATP synthase produces ATP from ADP in the presence of a proton or sodium gradient. F-type ATPases consist of two structural domains, F(1) containing the extramembraneous catalytic core and F(0) containing the membrane proton channel, linked together by a central stalk and a peripheral stalk. During catalysis, ATP synthesis in the catalytic domain of F(1) is coupled via a rotary mechanism of the central stalk subunits to proton translocation.</text>
</comment>
<comment type="function">
    <text evidence="1">Component of the F(0) channel, it forms part of the peripheral stalk, linking F(1) to F(0).</text>
</comment>
<comment type="subunit">
    <text evidence="1">F-type ATPases have 2 components, F(1) - the catalytic core - and F(0) - the membrane proton channel. F(1) has five subunits: alpha(3), beta(3), gamma(1), delta(1), epsilon(1). F(0) has four main subunits: a(1), b(1), b'(1) and c(10-14). The alpha and beta chains form an alternating ring which encloses part of the gamma chain. F(1) is attached to F(0) by a central stalk formed by the gamma and epsilon chains, while a peripheral stalk is formed by the delta, b and b' chains.</text>
</comment>
<comment type="subcellular location">
    <subcellularLocation>
        <location evidence="1">Plastid</location>
        <location evidence="1">Chloroplast thylakoid membrane</location>
        <topology evidence="1">Single-pass membrane protein</topology>
    </subcellularLocation>
</comment>
<comment type="miscellaneous">
    <text>In plastids the F-type ATPase is also known as CF(1)CF(0).</text>
</comment>
<comment type="similarity">
    <text evidence="1">Belongs to the ATPase B chain family.</text>
</comment>
<name>ATPF_MORIN</name>